<protein>
    <recommendedName>
        <fullName evidence="1">Methionine--tRNA ligase</fullName>
        <ecNumber evidence="1">6.1.1.10</ecNumber>
    </recommendedName>
    <alternativeName>
        <fullName evidence="1">Methionyl-tRNA synthetase</fullName>
        <shortName evidence="1">MetRS</shortName>
    </alternativeName>
</protein>
<reference key="1">
    <citation type="journal article" date="2011" name="J. Bacteriol.">
        <title>Comparative genomics of 28 Salmonella enterica isolates: evidence for CRISPR-mediated adaptive sublineage evolution.</title>
        <authorList>
            <person name="Fricke W.F."/>
            <person name="Mammel M.K."/>
            <person name="McDermott P.F."/>
            <person name="Tartera C."/>
            <person name="White D.G."/>
            <person name="Leclerc J.E."/>
            <person name="Ravel J."/>
            <person name="Cebula T.A."/>
        </authorList>
    </citation>
    <scope>NUCLEOTIDE SEQUENCE [LARGE SCALE GENOMIC DNA]</scope>
    <source>
        <strain>CVM19633</strain>
    </source>
</reference>
<organism>
    <name type="scientific">Salmonella schwarzengrund (strain CVM19633)</name>
    <dbReference type="NCBI Taxonomy" id="439843"/>
    <lineage>
        <taxon>Bacteria</taxon>
        <taxon>Pseudomonadati</taxon>
        <taxon>Pseudomonadota</taxon>
        <taxon>Gammaproteobacteria</taxon>
        <taxon>Enterobacterales</taxon>
        <taxon>Enterobacteriaceae</taxon>
        <taxon>Salmonella</taxon>
    </lineage>
</organism>
<proteinExistence type="inferred from homology"/>
<sequence length="677" mass="76286">MTQVAKKILVTCALPYANGSIHLGHMLEHIQADVWVRYQRMRGHEVNFICADDAHGTPIMLKAQQLGITPEQMIGEMSQEHQTDFAGFNISYDNYHSTHSDENRELSELIYTRLKENGFIKNRTISQLYDPEKGMFLPDRFVKGTCPKCKSADQYGDNCEVCGATYSPTELIEPKSVVSGATPVMRDSEHFFFDLPSFSEMLQAWTRSGALQEQVANKMQEWFESGLQQWDISRDAPYFGFEIPNAPGKYFYVWLDAPIGYMGSFKNLCDKRGDTTSFEEYWKKDSDAELYHFIGKDIVYFHSLFWPAMLEGSHFRKPTNLFVHGYVTVNGAKMSKSRGTFIKASTWLKHFDADSLRYYYTAKLSSRIDDIDLNLEDFVQRVNADIVNKVVNLASRNAGFINKRFDGVLAAELADPQLYKTFTDAAVVIGEAWESREFGKAIREIMALADVANRYVDEQAPWVVAKQEGRDADLQAICSMGINLFRVLMTYLKPVLPTLSERVEAFLNSELNWDAIEQPLLGHKVNTFKALYNRIDMKQVEALVEASKEEVKAAAAPVTGPLADFPIQETITFDDFAKVDLRVALIENAEFVEGSDKLLRLTLDLGGEKRNVFSGIRSAYPDPQALIGRQTVMVANLAPRKMRFGVSEGMVMAAGPGGKDIFLLSPDDGAKPGQQVK</sequence>
<evidence type="ECO:0000255" key="1">
    <source>
        <dbReference type="HAMAP-Rule" id="MF_00098"/>
    </source>
</evidence>
<gene>
    <name evidence="1" type="primary">metG</name>
    <name type="ordered locus">SeSA_A2393</name>
</gene>
<keyword id="KW-0030">Aminoacyl-tRNA synthetase</keyword>
<keyword id="KW-0067">ATP-binding</keyword>
<keyword id="KW-0963">Cytoplasm</keyword>
<keyword id="KW-0436">Ligase</keyword>
<keyword id="KW-0479">Metal-binding</keyword>
<keyword id="KW-0547">Nucleotide-binding</keyword>
<keyword id="KW-0648">Protein biosynthesis</keyword>
<keyword id="KW-0694">RNA-binding</keyword>
<keyword id="KW-0820">tRNA-binding</keyword>
<keyword id="KW-0862">Zinc</keyword>
<accession>B4TNL2</accession>
<name>SYM_SALSV</name>
<dbReference type="EC" id="6.1.1.10" evidence="1"/>
<dbReference type="EMBL" id="CP001127">
    <property type="protein sequence ID" value="ACF92394.1"/>
    <property type="molecule type" value="Genomic_DNA"/>
</dbReference>
<dbReference type="RefSeq" id="WP_000195345.1">
    <property type="nucleotide sequence ID" value="NC_011094.1"/>
</dbReference>
<dbReference type="SMR" id="B4TNL2"/>
<dbReference type="KEGG" id="sew:SeSA_A2393"/>
<dbReference type="HOGENOM" id="CLU_009710_7_0_6"/>
<dbReference type="Proteomes" id="UP000001865">
    <property type="component" value="Chromosome"/>
</dbReference>
<dbReference type="GO" id="GO:0005829">
    <property type="term" value="C:cytosol"/>
    <property type="evidence" value="ECO:0007669"/>
    <property type="project" value="TreeGrafter"/>
</dbReference>
<dbReference type="GO" id="GO:0005524">
    <property type="term" value="F:ATP binding"/>
    <property type="evidence" value="ECO:0007669"/>
    <property type="project" value="UniProtKB-UniRule"/>
</dbReference>
<dbReference type="GO" id="GO:0046872">
    <property type="term" value="F:metal ion binding"/>
    <property type="evidence" value="ECO:0007669"/>
    <property type="project" value="UniProtKB-KW"/>
</dbReference>
<dbReference type="GO" id="GO:0004825">
    <property type="term" value="F:methionine-tRNA ligase activity"/>
    <property type="evidence" value="ECO:0007669"/>
    <property type="project" value="UniProtKB-UniRule"/>
</dbReference>
<dbReference type="GO" id="GO:0000049">
    <property type="term" value="F:tRNA binding"/>
    <property type="evidence" value="ECO:0007669"/>
    <property type="project" value="UniProtKB-KW"/>
</dbReference>
<dbReference type="GO" id="GO:0006431">
    <property type="term" value="P:methionyl-tRNA aminoacylation"/>
    <property type="evidence" value="ECO:0007669"/>
    <property type="project" value="UniProtKB-UniRule"/>
</dbReference>
<dbReference type="CDD" id="cd07957">
    <property type="entry name" value="Anticodon_Ia_Met"/>
    <property type="match status" value="1"/>
</dbReference>
<dbReference type="CDD" id="cd00814">
    <property type="entry name" value="MetRS_core"/>
    <property type="match status" value="1"/>
</dbReference>
<dbReference type="CDD" id="cd02800">
    <property type="entry name" value="tRNA_bind_EcMetRS_like"/>
    <property type="match status" value="1"/>
</dbReference>
<dbReference type="FunFam" id="1.10.730.10:FF:000005">
    <property type="entry name" value="Methionine--tRNA ligase"/>
    <property type="match status" value="1"/>
</dbReference>
<dbReference type="FunFam" id="2.20.28.20:FF:000001">
    <property type="entry name" value="Methionine--tRNA ligase"/>
    <property type="match status" value="1"/>
</dbReference>
<dbReference type="FunFam" id="2.40.50.140:FF:000042">
    <property type="entry name" value="Methionine--tRNA ligase"/>
    <property type="match status" value="1"/>
</dbReference>
<dbReference type="Gene3D" id="3.40.50.620">
    <property type="entry name" value="HUPs"/>
    <property type="match status" value="1"/>
</dbReference>
<dbReference type="Gene3D" id="1.10.730.10">
    <property type="entry name" value="Isoleucyl-tRNA Synthetase, Domain 1"/>
    <property type="match status" value="1"/>
</dbReference>
<dbReference type="Gene3D" id="2.20.28.20">
    <property type="entry name" value="Methionyl-tRNA synthetase, Zn-domain"/>
    <property type="match status" value="1"/>
</dbReference>
<dbReference type="Gene3D" id="2.40.50.140">
    <property type="entry name" value="Nucleic acid-binding proteins"/>
    <property type="match status" value="1"/>
</dbReference>
<dbReference type="HAMAP" id="MF_00098">
    <property type="entry name" value="Met_tRNA_synth_type1"/>
    <property type="match status" value="1"/>
</dbReference>
<dbReference type="InterPro" id="IPR001412">
    <property type="entry name" value="aa-tRNA-synth_I_CS"/>
</dbReference>
<dbReference type="InterPro" id="IPR041872">
    <property type="entry name" value="Anticodon_Met"/>
</dbReference>
<dbReference type="InterPro" id="IPR004495">
    <property type="entry name" value="Met-tRNA-synth_bsu_C"/>
</dbReference>
<dbReference type="InterPro" id="IPR023458">
    <property type="entry name" value="Met-tRNA_ligase_1"/>
</dbReference>
<dbReference type="InterPro" id="IPR014758">
    <property type="entry name" value="Met-tRNA_synth"/>
</dbReference>
<dbReference type="InterPro" id="IPR015413">
    <property type="entry name" value="Methionyl/Leucyl_tRNA_Synth"/>
</dbReference>
<dbReference type="InterPro" id="IPR033911">
    <property type="entry name" value="MetRS_core"/>
</dbReference>
<dbReference type="InterPro" id="IPR029038">
    <property type="entry name" value="MetRS_Zn"/>
</dbReference>
<dbReference type="InterPro" id="IPR012340">
    <property type="entry name" value="NA-bd_OB-fold"/>
</dbReference>
<dbReference type="InterPro" id="IPR014729">
    <property type="entry name" value="Rossmann-like_a/b/a_fold"/>
</dbReference>
<dbReference type="InterPro" id="IPR002547">
    <property type="entry name" value="tRNA-bd_dom"/>
</dbReference>
<dbReference type="InterPro" id="IPR009080">
    <property type="entry name" value="tRNAsynth_Ia_anticodon-bd"/>
</dbReference>
<dbReference type="NCBIfam" id="TIGR00398">
    <property type="entry name" value="metG"/>
    <property type="match status" value="1"/>
</dbReference>
<dbReference type="NCBIfam" id="TIGR00399">
    <property type="entry name" value="metG_C_term"/>
    <property type="match status" value="1"/>
</dbReference>
<dbReference type="NCBIfam" id="NF001100">
    <property type="entry name" value="PRK00133.1"/>
    <property type="match status" value="1"/>
</dbReference>
<dbReference type="PANTHER" id="PTHR45765">
    <property type="entry name" value="METHIONINE--TRNA LIGASE"/>
    <property type="match status" value="1"/>
</dbReference>
<dbReference type="PANTHER" id="PTHR45765:SF1">
    <property type="entry name" value="METHIONINE--TRNA LIGASE, CYTOPLASMIC"/>
    <property type="match status" value="1"/>
</dbReference>
<dbReference type="Pfam" id="PF19303">
    <property type="entry name" value="Anticodon_3"/>
    <property type="match status" value="1"/>
</dbReference>
<dbReference type="Pfam" id="PF09334">
    <property type="entry name" value="tRNA-synt_1g"/>
    <property type="match status" value="1"/>
</dbReference>
<dbReference type="Pfam" id="PF01588">
    <property type="entry name" value="tRNA_bind"/>
    <property type="match status" value="1"/>
</dbReference>
<dbReference type="PRINTS" id="PR01041">
    <property type="entry name" value="TRNASYNTHMET"/>
</dbReference>
<dbReference type="SUPFAM" id="SSF47323">
    <property type="entry name" value="Anticodon-binding domain of a subclass of class I aminoacyl-tRNA synthetases"/>
    <property type="match status" value="1"/>
</dbReference>
<dbReference type="SUPFAM" id="SSF57770">
    <property type="entry name" value="Methionyl-tRNA synthetase (MetRS), Zn-domain"/>
    <property type="match status" value="1"/>
</dbReference>
<dbReference type="SUPFAM" id="SSF50249">
    <property type="entry name" value="Nucleic acid-binding proteins"/>
    <property type="match status" value="1"/>
</dbReference>
<dbReference type="SUPFAM" id="SSF52374">
    <property type="entry name" value="Nucleotidylyl transferase"/>
    <property type="match status" value="1"/>
</dbReference>
<dbReference type="PROSITE" id="PS00178">
    <property type="entry name" value="AA_TRNA_LIGASE_I"/>
    <property type="match status" value="1"/>
</dbReference>
<dbReference type="PROSITE" id="PS50886">
    <property type="entry name" value="TRBD"/>
    <property type="match status" value="1"/>
</dbReference>
<feature type="chain" id="PRO_1000093732" description="Methionine--tRNA ligase">
    <location>
        <begin position="1"/>
        <end position="677"/>
    </location>
</feature>
<feature type="domain" description="tRNA-binding" evidence="1">
    <location>
        <begin position="575"/>
        <end position="677"/>
    </location>
</feature>
<feature type="short sequence motif" description="'HIGH' region">
    <location>
        <begin position="15"/>
        <end position="25"/>
    </location>
</feature>
<feature type="short sequence motif" description="'KMSKS' region">
    <location>
        <begin position="333"/>
        <end position="337"/>
    </location>
</feature>
<feature type="binding site" evidence="1">
    <location>
        <position position="146"/>
    </location>
    <ligand>
        <name>Zn(2+)</name>
        <dbReference type="ChEBI" id="CHEBI:29105"/>
    </ligand>
</feature>
<feature type="binding site" evidence="1">
    <location>
        <position position="149"/>
    </location>
    <ligand>
        <name>Zn(2+)</name>
        <dbReference type="ChEBI" id="CHEBI:29105"/>
    </ligand>
</feature>
<feature type="binding site" evidence="1">
    <location>
        <position position="159"/>
    </location>
    <ligand>
        <name>Zn(2+)</name>
        <dbReference type="ChEBI" id="CHEBI:29105"/>
    </ligand>
</feature>
<feature type="binding site" evidence="1">
    <location>
        <position position="162"/>
    </location>
    <ligand>
        <name>Zn(2+)</name>
        <dbReference type="ChEBI" id="CHEBI:29105"/>
    </ligand>
</feature>
<feature type="binding site" evidence="1">
    <location>
        <position position="336"/>
    </location>
    <ligand>
        <name>ATP</name>
        <dbReference type="ChEBI" id="CHEBI:30616"/>
    </ligand>
</feature>
<comment type="function">
    <text evidence="1">Is required not only for elongation of protein synthesis but also for the initiation of all mRNA translation through initiator tRNA(fMet) aminoacylation.</text>
</comment>
<comment type="catalytic activity">
    <reaction evidence="1">
        <text>tRNA(Met) + L-methionine + ATP = L-methionyl-tRNA(Met) + AMP + diphosphate</text>
        <dbReference type="Rhea" id="RHEA:13481"/>
        <dbReference type="Rhea" id="RHEA-COMP:9667"/>
        <dbReference type="Rhea" id="RHEA-COMP:9698"/>
        <dbReference type="ChEBI" id="CHEBI:30616"/>
        <dbReference type="ChEBI" id="CHEBI:33019"/>
        <dbReference type="ChEBI" id="CHEBI:57844"/>
        <dbReference type="ChEBI" id="CHEBI:78442"/>
        <dbReference type="ChEBI" id="CHEBI:78530"/>
        <dbReference type="ChEBI" id="CHEBI:456215"/>
        <dbReference type="EC" id="6.1.1.10"/>
    </reaction>
</comment>
<comment type="cofactor">
    <cofactor evidence="1">
        <name>Zn(2+)</name>
        <dbReference type="ChEBI" id="CHEBI:29105"/>
    </cofactor>
    <text evidence="1">Binds 1 zinc ion per subunit.</text>
</comment>
<comment type="subunit">
    <text evidence="1">Homodimer.</text>
</comment>
<comment type="subcellular location">
    <subcellularLocation>
        <location evidence="1">Cytoplasm</location>
    </subcellularLocation>
</comment>
<comment type="similarity">
    <text evidence="1">Belongs to the class-I aminoacyl-tRNA synthetase family. MetG type 1 subfamily.</text>
</comment>